<comment type="function">
    <text evidence="4">Mediates visceral muscle contractile activity (myotropic activity).</text>
</comment>
<comment type="subcellular location">
    <subcellularLocation>
        <location evidence="4">Secreted</location>
    </subcellularLocation>
</comment>
<comment type="similarity">
    <text evidence="1">Belongs to the periviscerokinin family.</text>
</comment>
<evidence type="ECO:0000255" key="1"/>
<evidence type="ECO:0000269" key="2">
    <source>
    </source>
</evidence>
<evidence type="ECO:0000303" key="3">
    <source>
    </source>
</evidence>
<evidence type="ECO:0000305" key="4"/>
<dbReference type="GO" id="GO:0005576">
    <property type="term" value="C:extracellular region"/>
    <property type="evidence" value="ECO:0007669"/>
    <property type="project" value="UniProtKB-SubCell"/>
</dbReference>
<dbReference type="GO" id="GO:0007218">
    <property type="term" value="P:neuropeptide signaling pathway"/>
    <property type="evidence" value="ECO:0007669"/>
    <property type="project" value="UniProtKB-KW"/>
</dbReference>
<dbReference type="InterPro" id="IPR013231">
    <property type="entry name" value="Periviscerokinin"/>
</dbReference>
<dbReference type="Pfam" id="PF08259">
    <property type="entry name" value="Periviscerokin"/>
    <property type="match status" value="1"/>
</dbReference>
<name>PVK2_EUBSB</name>
<keyword id="KW-0027">Amidation</keyword>
<keyword id="KW-0903">Direct protein sequencing</keyword>
<keyword id="KW-0527">Neuropeptide</keyword>
<keyword id="KW-0964">Secreted</keyword>
<organism>
    <name type="scientific">Eublaberus sp. (strain BF-2008)</name>
    <name type="common">Cockroach</name>
    <dbReference type="NCBI Taxonomy" id="521510"/>
    <lineage>
        <taxon>Eukaryota</taxon>
        <taxon>Metazoa</taxon>
        <taxon>Ecdysozoa</taxon>
        <taxon>Arthropoda</taxon>
        <taxon>Hexapoda</taxon>
        <taxon>Insecta</taxon>
        <taxon>Pterygota</taxon>
        <taxon>Neoptera</taxon>
        <taxon>Polyneoptera</taxon>
        <taxon>Dictyoptera</taxon>
        <taxon>Blattodea</taxon>
        <taxon>Blaberoidea</taxon>
        <taxon>Blaberidae</taxon>
        <taxon>Blaberinae</taxon>
        <taxon>Eublaberus</taxon>
    </lineage>
</organism>
<sequence>GSSGLISMPRV</sequence>
<protein>
    <recommendedName>
        <fullName evidence="3">Periviscerokinin-2</fullName>
        <shortName evidence="3">EubSp-PVK-2</shortName>
    </recommendedName>
</protein>
<feature type="peptide" id="PRO_0000378789" description="Periviscerokinin-2" evidence="2">
    <location>
        <begin position="1"/>
        <end position="11"/>
    </location>
</feature>
<feature type="modified residue" description="Valine amide" evidence="2">
    <location>
        <position position="11"/>
    </location>
</feature>
<proteinExistence type="evidence at protein level"/>
<accession>P85627</accession>
<reference evidence="4" key="1">
    <citation type="journal article" date="2009" name="BMC Evol. Biol.">
        <title>A proteomic approach for studying insect phylogeny: CAPA peptides of ancient insect taxa (Dictyoptera, Blattoptera) as a test case.</title>
        <authorList>
            <person name="Roth S."/>
            <person name="Fromm B."/>
            <person name="Gaede G."/>
            <person name="Predel R."/>
        </authorList>
    </citation>
    <scope>PROTEIN SEQUENCE</scope>
    <scope>AMIDATION AT VAL-11</scope>
    <source>
        <tissue evidence="2">Abdominal perisympathetic organs</tissue>
    </source>
</reference>